<evidence type="ECO:0000255" key="1">
    <source>
        <dbReference type="HAMAP-Rule" id="MF_01703"/>
    </source>
</evidence>
<feature type="chain" id="PRO_0000092582" description="ATP-dependent lipid A-core flippase">
    <location>
        <begin position="1"/>
        <end position="582"/>
    </location>
</feature>
<feature type="transmembrane region" description="Helical" evidence="1">
    <location>
        <begin position="26"/>
        <end position="46"/>
    </location>
</feature>
<feature type="transmembrane region" description="Helical" evidence="1">
    <location>
        <begin position="68"/>
        <end position="88"/>
    </location>
</feature>
<feature type="transmembrane region" description="Helical" evidence="1">
    <location>
        <begin position="140"/>
        <end position="160"/>
    </location>
</feature>
<feature type="transmembrane region" description="Helical" evidence="1">
    <location>
        <begin position="164"/>
        <end position="184"/>
    </location>
</feature>
<feature type="transmembrane region" description="Helical" evidence="1">
    <location>
        <begin position="252"/>
        <end position="272"/>
    </location>
</feature>
<feature type="domain" description="ABC transmembrane type-1" evidence="1">
    <location>
        <begin position="27"/>
        <end position="310"/>
    </location>
</feature>
<feature type="domain" description="ABC transporter" evidence="1">
    <location>
        <begin position="342"/>
        <end position="578"/>
    </location>
</feature>
<feature type="binding site" evidence="1">
    <location>
        <begin position="376"/>
        <end position="383"/>
    </location>
    <ligand>
        <name>ATP</name>
        <dbReference type="ChEBI" id="CHEBI:30616"/>
    </ligand>
</feature>
<reference key="1">
    <citation type="submission" date="2003-06" db="EMBL/GenBank/DDBJ databases">
        <title>The complete genome sequence of Haemophilus ducreyi.</title>
        <authorList>
            <person name="Munson R.S. Jr."/>
            <person name="Ray W.C."/>
            <person name="Mahairas G."/>
            <person name="Sabo P."/>
            <person name="Mungur R."/>
            <person name="Johnson L."/>
            <person name="Nguyen D."/>
            <person name="Wang J."/>
            <person name="Forst C."/>
            <person name="Hood L."/>
        </authorList>
    </citation>
    <scope>NUCLEOTIDE SEQUENCE [LARGE SCALE GENOMIC DNA]</scope>
    <source>
        <strain>35000HP / ATCC 700724</strain>
    </source>
</reference>
<keyword id="KW-0067">ATP-binding</keyword>
<keyword id="KW-0997">Cell inner membrane</keyword>
<keyword id="KW-1003">Cell membrane</keyword>
<keyword id="KW-0445">Lipid transport</keyword>
<keyword id="KW-0472">Membrane</keyword>
<keyword id="KW-0547">Nucleotide-binding</keyword>
<keyword id="KW-1185">Reference proteome</keyword>
<keyword id="KW-1278">Translocase</keyword>
<keyword id="KW-0812">Transmembrane</keyword>
<keyword id="KW-1133">Transmembrane helix</keyword>
<keyword id="KW-0813">Transport</keyword>
<organism>
    <name type="scientific">Haemophilus ducreyi (strain 35000HP / ATCC 700724)</name>
    <dbReference type="NCBI Taxonomy" id="233412"/>
    <lineage>
        <taxon>Bacteria</taxon>
        <taxon>Pseudomonadati</taxon>
        <taxon>Pseudomonadota</taxon>
        <taxon>Gammaproteobacteria</taxon>
        <taxon>Pasteurellales</taxon>
        <taxon>Pasteurellaceae</taxon>
        <taxon>Haemophilus</taxon>
    </lineage>
</organism>
<accession>Q7VL52</accession>
<name>MSBA_HAEDU</name>
<protein>
    <recommendedName>
        <fullName evidence="1">ATP-dependent lipid A-core flippase</fullName>
        <ecNumber evidence="1">7.5.2.6</ecNumber>
    </recommendedName>
    <alternativeName>
        <fullName evidence="1">Lipid A export ATP-binding/permease protein MsbA</fullName>
    </alternativeName>
</protein>
<dbReference type="EC" id="7.5.2.6" evidence="1"/>
<dbReference type="EMBL" id="AE017143">
    <property type="protein sequence ID" value="AAP96407.1"/>
    <property type="molecule type" value="Genomic_DNA"/>
</dbReference>
<dbReference type="RefSeq" id="WP_010945439.1">
    <property type="nucleotide sequence ID" value="NC_002940.2"/>
</dbReference>
<dbReference type="SMR" id="Q7VL52"/>
<dbReference type="STRING" id="233412.HD_1630"/>
<dbReference type="KEGG" id="hdu:HD_1630"/>
<dbReference type="eggNOG" id="COG1132">
    <property type="taxonomic scope" value="Bacteria"/>
</dbReference>
<dbReference type="HOGENOM" id="CLU_000604_84_3_6"/>
<dbReference type="OrthoDB" id="9806127at2"/>
<dbReference type="Proteomes" id="UP000001022">
    <property type="component" value="Chromosome"/>
</dbReference>
<dbReference type="GO" id="GO:0005886">
    <property type="term" value="C:plasma membrane"/>
    <property type="evidence" value="ECO:0007669"/>
    <property type="project" value="UniProtKB-SubCell"/>
</dbReference>
<dbReference type="GO" id="GO:0015421">
    <property type="term" value="F:ABC-type oligopeptide transporter activity"/>
    <property type="evidence" value="ECO:0007669"/>
    <property type="project" value="TreeGrafter"/>
</dbReference>
<dbReference type="GO" id="GO:0005524">
    <property type="term" value="F:ATP binding"/>
    <property type="evidence" value="ECO:0007669"/>
    <property type="project" value="UniProtKB-KW"/>
</dbReference>
<dbReference type="GO" id="GO:0016887">
    <property type="term" value="F:ATP hydrolysis activity"/>
    <property type="evidence" value="ECO:0007669"/>
    <property type="project" value="InterPro"/>
</dbReference>
<dbReference type="GO" id="GO:0034040">
    <property type="term" value="F:ATPase-coupled lipid transmembrane transporter activity"/>
    <property type="evidence" value="ECO:0007669"/>
    <property type="project" value="InterPro"/>
</dbReference>
<dbReference type="CDD" id="cd18552">
    <property type="entry name" value="ABC_6TM_MsbA_like"/>
    <property type="match status" value="1"/>
</dbReference>
<dbReference type="FunFam" id="3.40.50.300:FF:000140">
    <property type="entry name" value="Lipid A export ATP-binding/permease protein MsbA"/>
    <property type="match status" value="1"/>
</dbReference>
<dbReference type="Gene3D" id="1.20.1560.10">
    <property type="entry name" value="ABC transporter type 1, transmembrane domain"/>
    <property type="match status" value="1"/>
</dbReference>
<dbReference type="Gene3D" id="3.40.50.300">
    <property type="entry name" value="P-loop containing nucleotide triphosphate hydrolases"/>
    <property type="match status" value="1"/>
</dbReference>
<dbReference type="InterPro" id="IPR003593">
    <property type="entry name" value="AAA+_ATPase"/>
</dbReference>
<dbReference type="InterPro" id="IPR011527">
    <property type="entry name" value="ABC1_TM_dom"/>
</dbReference>
<dbReference type="InterPro" id="IPR036640">
    <property type="entry name" value="ABC1_TM_sf"/>
</dbReference>
<dbReference type="InterPro" id="IPR003439">
    <property type="entry name" value="ABC_transporter-like_ATP-bd"/>
</dbReference>
<dbReference type="InterPro" id="IPR017871">
    <property type="entry name" value="ABC_transporter-like_CS"/>
</dbReference>
<dbReference type="InterPro" id="IPR011917">
    <property type="entry name" value="ABC_transpr_lipidA"/>
</dbReference>
<dbReference type="InterPro" id="IPR027417">
    <property type="entry name" value="P-loop_NTPase"/>
</dbReference>
<dbReference type="InterPro" id="IPR039421">
    <property type="entry name" value="Type_1_exporter"/>
</dbReference>
<dbReference type="NCBIfam" id="TIGR02203">
    <property type="entry name" value="MsbA_lipidA"/>
    <property type="match status" value="1"/>
</dbReference>
<dbReference type="NCBIfam" id="NF008381">
    <property type="entry name" value="PRK11176.1"/>
    <property type="match status" value="1"/>
</dbReference>
<dbReference type="PANTHER" id="PTHR43394:SF1">
    <property type="entry name" value="ATP-BINDING CASSETTE SUB-FAMILY B MEMBER 10, MITOCHONDRIAL"/>
    <property type="match status" value="1"/>
</dbReference>
<dbReference type="PANTHER" id="PTHR43394">
    <property type="entry name" value="ATP-DEPENDENT PERMEASE MDL1, MITOCHONDRIAL"/>
    <property type="match status" value="1"/>
</dbReference>
<dbReference type="Pfam" id="PF00664">
    <property type="entry name" value="ABC_membrane"/>
    <property type="match status" value="1"/>
</dbReference>
<dbReference type="Pfam" id="PF00005">
    <property type="entry name" value="ABC_tran"/>
    <property type="match status" value="1"/>
</dbReference>
<dbReference type="SMART" id="SM00382">
    <property type="entry name" value="AAA"/>
    <property type="match status" value="1"/>
</dbReference>
<dbReference type="SUPFAM" id="SSF90123">
    <property type="entry name" value="ABC transporter transmembrane region"/>
    <property type="match status" value="1"/>
</dbReference>
<dbReference type="SUPFAM" id="SSF52540">
    <property type="entry name" value="P-loop containing nucleoside triphosphate hydrolases"/>
    <property type="match status" value="1"/>
</dbReference>
<dbReference type="PROSITE" id="PS50929">
    <property type="entry name" value="ABC_TM1F"/>
    <property type="match status" value="1"/>
</dbReference>
<dbReference type="PROSITE" id="PS00211">
    <property type="entry name" value="ABC_TRANSPORTER_1"/>
    <property type="match status" value="1"/>
</dbReference>
<dbReference type="PROSITE" id="PS50893">
    <property type="entry name" value="ABC_TRANSPORTER_2"/>
    <property type="match status" value="1"/>
</dbReference>
<dbReference type="PROSITE" id="PS51239">
    <property type="entry name" value="MSBA"/>
    <property type="match status" value="1"/>
</dbReference>
<comment type="function">
    <text evidence="1">Involved in lipopolysaccharide (LPS) biosynthesis. Translocates lipid A-core from the inner to the outer leaflet of the inner membrane. Transmembrane domains (TMD) form a pore in the inner membrane and the ATP-binding domain (NBD) is responsible for energy generation.</text>
</comment>
<comment type="catalytic activity">
    <reaction evidence="1">
        <text>ATP + H2O + lipid A-core oligosaccharideSide 1 = ADP + phosphate + lipid A-core oligosaccharideSide 2.</text>
        <dbReference type="EC" id="7.5.2.6"/>
    </reaction>
</comment>
<comment type="subunit">
    <text evidence="1">Homodimer.</text>
</comment>
<comment type="subcellular location">
    <subcellularLocation>
        <location evidence="1">Cell inner membrane</location>
        <topology evidence="1">Multi-pass membrane protein</topology>
    </subcellularLocation>
</comment>
<comment type="domain">
    <text evidence="1">In MsbA the ATP-binding domain (NBD) and the transmembrane domain (TMD) are fused.</text>
</comment>
<comment type="similarity">
    <text evidence="1">Belongs to the ABC transporter superfamily. Lipid exporter (TC 3.A.1.106) family.</text>
</comment>
<proteinExistence type="inferred from homology"/>
<gene>
    <name evidence="1" type="primary">msbA</name>
    <name type="ordered locus">HD_1630</name>
</gene>
<sequence length="582" mass="64348">MQETDLSIIKTFKRLFPIIRNYKWGLIAASVALILNALVDSSLIYLLKPLLDDGFGKADNAFLKQMAILVMLFILLRGVSNYIASYCLSWVSGKVVMTLRRNIFQHLMYMPVSYFDKNPTGRLLSRVTYDTEMVASSSSYVLVTIVREGAYLISLFAVMVYTSWQLSIVLFLLAPIIAFLISIVSKRFRILSRNIQNSMGELTVTTEQMLKGHKVVLSFGGQKVEKARFDRVSNDMRRKGMKIVSADGISDGLVQLIASLALSAVLYVATFPEVMSENLTAGSFTVVFSSMMAMLRPLKSLTSVNSQFQRGMAACQTLFEFLDLKTEKNNGTKQVERAQGCITFDNVIFSYEGKEEQALNQVSFTIPQGKTVALVGRSGSGKSTIASLLTRFYDVNEGQILLDGVNIEEYTLENLREQCSVVSQQVHLFNDTIANNIAYAAKDKYSRAQIIAAAQAAHAMEFIEKLEQGLDTVIGENGASLSGGQRQRLAIARALLRNAPVLVLDEATSALDTESELAIQSALAALQKNKTVLVIAHRLSTIEKADEILVVDQGKIVERGSHEQLLAKGGAYKQLYSMQFSE</sequence>